<feature type="chain" id="PRO_0000296026" description="Small ribosomal subunit protein uS12">
    <location>
        <begin position="1"/>
        <end position="124"/>
    </location>
</feature>
<feature type="region of interest" description="Disordered" evidence="3">
    <location>
        <begin position="1"/>
        <end position="30"/>
    </location>
</feature>
<feature type="region of interest" description="Disordered" evidence="3">
    <location>
        <begin position="102"/>
        <end position="124"/>
    </location>
</feature>
<feature type="compositionally biased region" description="Basic residues" evidence="3">
    <location>
        <begin position="108"/>
        <end position="118"/>
    </location>
</feature>
<feature type="modified residue" description="3-methylthioaspartic acid" evidence="1">
    <location>
        <position position="89"/>
    </location>
</feature>
<protein>
    <recommendedName>
        <fullName evidence="2">Small ribosomal subunit protein uS12</fullName>
    </recommendedName>
    <alternativeName>
        <fullName evidence="4">30S ribosomal protein S12</fullName>
    </alternativeName>
</protein>
<organism>
    <name type="scientific">Saccharopolyspora erythraea (strain ATCC 11635 / DSM 40517 / JCM 4748 / NBRC 13426 / NCIMB 8594 / NRRL 2338)</name>
    <dbReference type="NCBI Taxonomy" id="405948"/>
    <lineage>
        <taxon>Bacteria</taxon>
        <taxon>Bacillati</taxon>
        <taxon>Actinomycetota</taxon>
        <taxon>Actinomycetes</taxon>
        <taxon>Pseudonocardiales</taxon>
        <taxon>Pseudonocardiaceae</taxon>
        <taxon>Saccharopolyspora</taxon>
    </lineage>
</organism>
<gene>
    <name evidence="2" type="primary">rpsL</name>
    <name type="ordered locus">SACE_6841</name>
</gene>
<dbReference type="EMBL" id="AM420293">
    <property type="protein sequence ID" value="CAM06005.1"/>
    <property type="molecule type" value="Genomic_DNA"/>
</dbReference>
<dbReference type="RefSeq" id="WP_009948619.1">
    <property type="nucleotide sequence ID" value="NZ_PDBV01000001.1"/>
</dbReference>
<dbReference type="SMR" id="A4FPN0"/>
<dbReference type="STRING" id="405948.SACE_6841"/>
<dbReference type="KEGG" id="sen:SACE_6841"/>
<dbReference type="eggNOG" id="COG0048">
    <property type="taxonomic scope" value="Bacteria"/>
</dbReference>
<dbReference type="HOGENOM" id="CLU_104295_1_2_11"/>
<dbReference type="OrthoDB" id="9802366at2"/>
<dbReference type="Proteomes" id="UP000006728">
    <property type="component" value="Chromosome"/>
</dbReference>
<dbReference type="GO" id="GO:0015935">
    <property type="term" value="C:small ribosomal subunit"/>
    <property type="evidence" value="ECO:0007669"/>
    <property type="project" value="InterPro"/>
</dbReference>
<dbReference type="GO" id="GO:0019843">
    <property type="term" value="F:rRNA binding"/>
    <property type="evidence" value="ECO:0007669"/>
    <property type="project" value="UniProtKB-UniRule"/>
</dbReference>
<dbReference type="GO" id="GO:0003735">
    <property type="term" value="F:structural constituent of ribosome"/>
    <property type="evidence" value="ECO:0007669"/>
    <property type="project" value="InterPro"/>
</dbReference>
<dbReference type="GO" id="GO:0000049">
    <property type="term" value="F:tRNA binding"/>
    <property type="evidence" value="ECO:0007669"/>
    <property type="project" value="UniProtKB-UniRule"/>
</dbReference>
<dbReference type="GO" id="GO:0006412">
    <property type="term" value="P:translation"/>
    <property type="evidence" value="ECO:0007669"/>
    <property type="project" value="UniProtKB-UniRule"/>
</dbReference>
<dbReference type="CDD" id="cd03368">
    <property type="entry name" value="Ribosomal_S12"/>
    <property type="match status" value="1"/>
</dbReference>
<dbReference type="FunFam" id="2.40.50.140:FF:000001">
    <property type="entry name" value="30S ribosomal protein S12"/>
    <property type="match status" value="1"/>
</dbReference>
<dbReference type="Gene3D" id="2.40.50.140">
    <property type="entry name" value="Nucleic acid-binding proteins"/>
    <property type="match status" value="1"/>
</dbReference>
<dbReference type="HAMAP" id="MF_00403_B">
    <property type="entry name" value="Ribosomal_uS12_B"/>
    <property type="match status" value="1"/>
</dbReference>
<dbReference type="InterPro" id="IPR012340">
    <property type="entry name" value="NA-bd_OB-fold"/>
</dbReference>
<dbReference type="InterPro" id="IPR006032">
    <property type="entry name" value="Ribosomal_uS12"/>
</dbReference>
<dbReference type="InterPro" id="IPR005679">
    <property type="entry name" value="Ribosomal_uS12_bac"/>
</dbReference>
<dbReference type="NCBIfam" id="TIGR00981">
    <property type="entry name" value="rpsL_bact"/>
    <property type="match status" value="1"/>
</dbReference>
<dbReference type="PANTHER" id="PTHR11652">
    <property type="entry name" value="30S RIBOSOMAL PROTEIN S12 FAMILY MEMBER"/>
    <property type="match status" value="1"/>
</dbReference>
<dbReference type="Pfam" id="PF00164">
    <property type="entry name" value="Ribosom_S12_S23"/>
    <property type="match status" value="1"/>
</dbReference>
<dbReference type="PIRSF" id="PIRSF002133">
    <property type="entry name" value="Ribosomal_S12/S23"/>
    <property type="match status" value="1"/>
</dbReference>
<dbReference type="PRINTS" id="PR01034">
    <property type="entry name" value="RIBOSOMALS12"/>
</dbReference>
<dbReference type="SUPFAM" id="SSF50249">
    <property type="entry name" value="Nucleic acid-binding proteins"/>
    <property type="match status" value="1"/>
</dbReference>
<dbReference type="PROSITE" id="PS00055">
    <property type="entry name" value="RIBOSOMAL_S12"/>
    <property type="match status" value="1"/>
</dbReference>
<comment type="function">
    <text evidence="2">With S4 and S5 plays an important role in translational accuracy.</text>
</comment>
<comment type="function">
    <text evidence="2">Interacts with and stabilizes bases of the 16S rRNA that are involved in tRNA selection in the A site and with the mRNA backbone. Located at the interface of the 30S and 50S subunits, it traverses the body of the 30S subunit contacting proteins on the other side and probably holding the rRNA structure together. The combined cluster of proteins S8, S12 and S17 appears to hold together the shoulder and platform of the 30S subunit.</text>
</comment>
<comment type="subunit">
    <text evidence="2">Part of the 30S ribosomal subunit. Contacts proteins S8 and S17. May interact with IF1 in the 30S initiation complex.</text>
</comment>
<comment type="similarity">
    <text evidence="2">Belongs to the universal ribosomal protein uS12 family.</text>
</comment>
<reference key="1">
    <citation type="journal article" date="2007" name="Nat. Biotechnol.">
        <title>Complete genome sequence of the erythromycin-producing bacterium Saccharopolyspora erythraea NRRL23338.</title>
        <authorList>
            <person name="Oliynyk M."/>
            <person name="Samborskyy M."/>
            <person name="Lester J.B."/>
            <person name="Mironenko T."/>
            <person name="Scott N."/>
            <person name="Dickens S."/>
            <person name="Haydock S.F."/>
            <person name="Leadlay P.F."/>
        </authorList>
    </citation>
    <scope>NUCLEOTIDE SEQUENCE [LARGE SCALE GENOMIC DNA]</scope>
    <source>
        <strain>ATCC 11635 / DSM 40517 / JCM 4748 / NBRC 13426 / NCIMB 8594 / NRRL 2338</strain>
    </source>
</reference>
<evidence type="ECO:0000250" key="1"/>
<evidence type="ECO:0000255" key="2">
    <source>
        <dbReference type="HAMAP-Rule" id="MF_00403"/>
    </source>
</evidence>
<evidence type="ECO:0000256" key="3">
    <source>
        <dbReference type="SAM" id="MobiDB-lite"/>
    </source>
</evidence>
<evidence type="ECO:0000305" key="4"/>
<proteinExistence type="inferred from homology"/>
<keyword id="KW-0488">Methylation</keyword>
<keyword id="KW-1185">Reference proteome</keyword>
<keyword id="KW-0687">Ribonucleoprotein</keyword>
<keyword id="KW-0689">Ribosomal protein</keyword>
<keyword id="KW-0694">RNA-binding</keyword>
<keyword id="KW-0699">rRNA-binding</keyword>
<keyword id="KW-0820">tRNA-binding</keyword>
<name>RS12_SACEN</name>
<sequence length="124" mass="13706">MPTIQQLVRKGRQDKVAKTKTAALKGSPQRRGVCTRVYTTTPKKPNSALRKVARVKLTSGIEVTAYIPGEGHNLQEHSIVLVRGGRVKDLPGVRYKIIRGSADTQGVKNRKQARSRYGAKKEKS</sequence>
<accession>A4FPN0</accession>